<reference key="1">
    <citation type="journal article" date="1988" name="EMBO J.">
        <title>Amino acid sequences and homopolymer-forming ability of the intermediate filament proteins from an invertebrate epithelium.</title>
        <authorList>
            <person name="Weber K."/>
            <person name="Plessmann U."/>
            <person name="Dodemont H."/>
            <person name="Kossmagk-Stephan K."/>
        </authorList>
    </citation>
    <scope>PROTEIN SEQUENCE</scope>
    <source>
        <tissue>Esophageal epithelium</tissue>
    </source>
</reference>
<feature type="chain" id="PRO_0000063830" description="Non-neuronal cytoplasmic intermediate filament protein A">
    <location>
        <begin position="1"/>
        <end position="551"/>
    </location>
</feature>
<feature type="domain" description="IF rod" evidence="3">
    <location>
        <begin position="71"/>
        <end position="423"/>
    </location>
</feature>
<feature type="domain" description="LTD" evidence="2">
    <location>
        <begin position="454"/>
        <end position="551"/>
    </location>
</feature>
<feature type="region of interest" description="Head">
    <location>
        <begin position="1"/>
        <end position="74"/>
    </location>
</feature>
<feature type="region of interest" description="Disordered" evidence="4">
    <location>
        <begin position="1"/>
        <end position="54"/>
    </location>
</feature>
<feature type="region of interest" description="Coil 1A">
    <location>
        <begin position="75"/>
        <end position="106"/>
    </location>
</feature>
<feature type="region of interest" description="Linker 1">
    <location>
        <begin position="107"/>
        <end position="120"/>
    </location>
</feature>
<feature type="region of interest" description="Coil 1B">
    <location>
        <begin position="121"/>
        <end position="258"/>
    </location>
</feature>
<feature type="region of interest" description="Linker 12">
    <location>
        <begin position="259"/>
        <end position="275"/>
    </location>
</feature>
<feature type="region of interest" description="Coil 2">
    <location>
        <begin position="276"/>
        <end position="423"/>
    </location>
</feature>
<feature type="region of interest" description="Tail">
    <location>
        <begin position="424"/>
        <end position="551"/>
    </location>
</feature>
<feature type="compositionally biased region" description="Low complexity" evidence="4">
    <location>
        <begin position="25"/>
        <end position="47"/>
    </location>
</feature>
<feature type="modified residue" description="N-acetylthreonine" evidence="1">
    <location>
        <position position="1"/>
    </location>
</feature>
<accession>P16274</accession>
<keyword id="KW-0007">Acetylation</keyword>
<keyword id="KW-0025">Alternative splicing</keyword>
<keyword id="KW-0175">Coiled coil</keyword>
<keyword id="KW-0963">Cytoplasm</keyword>
<keyword id="KW-0903">Direct protein sequencing</keyword>
<keyword id="KW-0403">Intermediate filament</keyword>
<comment type="function">
    <text>Epithelial intermediate filament protein.</text>
</comment>
<comment type="subunit">
    <text>Can form homomers.</text>
</comment>
<comment type="subcellular location">
    <subcellularLocation>
        <location>Cytoplasm</location>
    </subcellularLocation>
</comment>
<comment type="alternative products">
    <event type="alternative splicing"/>
    <isoform>
        <id>P16274-1</id>
        <name>IFA</name>
        <sequence type="displayed"/>
    </isoform>
    <isoform>
        <id>P16275-1</id>
        <name>IFB</name>
        <sequence type="external"/>
    </isoform>
</comment>
<comment type="similarity">
    <text evidence="3">Belongs to the intermediate filament family.</text>
</comment>
<proteinExistence type="evidence at protein level"/>
<organism>
    <name type="scientific">Helix pomatia</name>
    <name type="common">Roman snail</name>
    <name type="synonym">Edible snail</name>
    <dbReference type="NCBI Taxonomy" id="6536"/>
    <lineage>
        <taxon>Eukaryota</taxon>
        <taxon>Metazoa</taxon>
        <taxon>Spiralia</taxon>
        <taxon>Lophotrochozoa</taxon>
        <taxon>Mollusca</taxon>
        <taxon>Gastropoda</taxon>
        <taxon>Heterobranchia</taxon>
        <taxon>Euthyneura</taxon>
        <taxon>Panpulmonata</taxon>
        <taxon>Eupulmonata</taxon>
        <taxon>Stylommatophora</taxon>
        <taxon>Helicina</taxon>
        <taxon>Helicoidea</taxon>
        <taxon>Helicidae</taxon>
        <taxon>Helix</taxon>
    </lineage>
</organism>
<evidence type="ECO:0000250" key="1">
    <source>
        <dbReference type="UniProtKB" id="P16275"/>
    </source>
</evidence>
<evidence type="ECO:0000255" key="2">
    <source>
        <dbReference type="PROSITE-ProRule" id="PRU01187"/>
    </source>
</evidence>
<evidence type="ECO:0000255" key="3">
    <source>
        <dbReference type="PROSITE-ProRule" id="PRU01188"/>
    </source>
</evidence>
<evidence type="ECO:0000256" key="4">
    <source>
        <dbReference type="SAM" id="MobiDB-lite"/>
    </source>
</evidence>
<sequence length="551" mass="61235">TSKISTTYEEEGRQSKIQPRAFVITRSGPTSRSSSYSARQSYGSRSSITPGVYQQLSSSGITDFRGTREKEKREMQNLNERLAGYIEKVHFLDAQVKKLEAENXXXXXXXXXXXXXXXXXXXXXXXXXXXXXXXXXXXXXXXXXXXXXXXXXXXXXXXXXXXXXXXXXXXXXXXXXXXXXXXXXXXXXXXXXXXXXXXXXXXXXXXXXXXXXXXXXXXXXXXXXXXXXXXXXXXXXXXXXXXXXXXXXXXXXXXXXXXXXXXXXXXMDYAEFWKSELSKCVRDIQSAYDEKIDIIXXXXXXXXXXXXXXXXXXXXXXXMQLQHVQEEVKKLRTQAGEKNAAYAEXXXXXXXXXXXXXXXXXXXXXXXXXXXXXXXXXXXXXXXXXXXXXXXXXXXXXXXXXXXXMELEIACYRKLLEGEESRVGLRSLVEQAIGVQGRGTASLKDTIQQSTASGSMTVQRSSKGPIAFNSVDQSGSNIVIENTTSGARAKTQSLKGWRVDKTVAGRVAASIELKNYDLPPNTKYTIWAKGAKDRATADNEQIADMFSLGVG</sequence>
<protein>
    <recommendedName>
        <fullName>Non-neuronal cytoplasmic intermediate filament protein A</fullName>
        <shortName>IFA</shortName>
    </recommendedName>
</protein>
<dbReference type="PIR" id="S01295">
    <property type="entry name" value="S01295"/>
</dbReference>
<dbReference type="GO" id="GO:0005737">
    <property type="term" value="C:cytoplasm"/>
    <property type="evidence" value="ECO:0007669"/>
    <property type="project" value="UniProtKB-SubCell"/>
</dbReference>
<dbReference type="GO" id="GO:0005882">
    <property type="term" value="C:intermediate filament"/>
    <property type="evidence" value="ECO:0000314"/>
    <property type="project" value="CACAO"/>
</dbReference>
<dbReference type="GO" id="GO:0005635">
    <property type="term" value="C:nuclear envelope"/>
    <property type="evidence" value="ECO:0007669"/>
    <property type="project" value="TreeGrafter"/>
</dbReference>
<dbReference type="GO" id="GO:0005652">
    <property type="term" value="C:nuclear lamina"/>
    <property type="evidence" value="ECO:0007669"/>
    <property type="project" value="TreeGrafter"/>
</dbReference>
<dbReference type="GO" id="GO:0005200">
    <property type="term" value="F:structural constituent of cytoskeleton"/>
    <property type="evidence" value="ECO:0007669"/>
    <property type="project" value="TreeGrafter"/>
</dbReference>
<dbReference type="GO" id="GO:0031507">
    <property type="term" value="P:heterochromatin formation"/>
    <property type="evidence" value="ECO:0007669"/>
    <property type="project" value="TreeGrafter"/>
</dbReference>
<dbReference type="GO" id="GO:0006998">
    <property type="term" value="P:nuclear envelope organization"/>
    <property type="evidence" value="ECO:0007669"/>
    <property type="project" value="TreeGrafter"/>
</dbReference>
<dbReference type="GO" id="GO:0007097">
    <property type="term" value="P:nuclear migration"/>
    <property type="evidence" value="ECO:0007669"/>
    <property type="project" value="TreeGrafter"/>
</dbReference>
<dbReference type="GO" id="GO:0051664">
    <property type="term" value="P:nuclear pore localization"/>
    <property type="evidence" value="ECO:0007669"/>
    <property type="project" value="TreeGrafter"/>
</dbReference>
<dbReference type="GO" id="GO:0090435">
    <property type="term" value="P:protein localization to nuclear envelope"/>
    <property type="evidence" value="ECO:0007669"/>
    <property type="project" value="TreeGrafter"/>
</dbReference>
<dbReference type="Gene3D" id="1.20.5.170">
    <property type="match status" value="1"/>
</dbReference>
<dbReference type="Gene3D" id="2.60.40.1260">
    <property type="entry name" value="Lamin Tail domain"/>
    <property type="match status" value="1"/>
</dbReference>
<dbReference type="InterPro" id="IPR018039">
    <property type="entry name" value="IF_conserved"/>
</dbReference>
<dbReference type="InterPro" id="IPR039008">
    <property type="entry name" value="IF_rod_dom"/>
</dbReference>
<dbReference type="InterPro" id="IPR001322">
    <property type="entry name" value="Lamin_tail_dom"/>
</dbReference>
<dbReference type="InterPro" id="IPR036415">
    <property type="entry name" value="Lamin_tail_dom_sf"/>
</dbReference>
<dbReference type="PANTHER" id="PTHR45721:SF12">
    <property type="entry name" value="INTERMEDIATE FILAMENT PROTEIN IFA-1"/>
    <property type="match status" value="1"/>
</dbReference>
<dbReference type="PANTHER" id="PTHR45721">
    <property type="entry name" value="LAMIN DM0-RELATED"/>
    <property type="match status" value="1"/>
</dbReference>
<dbReference type="SUPFAM" id="SSF64593">
    <property type="entry name" value="Intermediate filament protein, coiled coil region"/>
    <property type="match status" value="1"/>
</dbReference>
<dbReference type="SUPFAM" id="SSF74853">
    <property type="entry name" value="Lamin A/C globular tail domain"/>
    <property type="match status" value="1"/>
</dbReference>
<dbReference type="PROSITE" id="PS00226">
    <property type="entry name" value="IF_ROD_1"/>
    <property type="match status" value="1"/>
</dbReference>
<dbReference type="PROSITE" id="PS51842">
    <property type="entry name" value="IF_ROD_2"/>
    <property type="match status" value="1"/>
</dbReference>
<dbReference type="PROSITE" id="PS51841">
    <property type="entry name" value="LTD"/>
    <property type="match status" value="1"/>
</dbReference>
<name>IFEA_HELPO</name>